<comment type="function">
    <text evidence="1">NDH-1 shuttles electrons from NADH, via FMN and iron-sulfur (Fe-S) centers, to quinones in the respiratory chain. The immediate electron acceptor for the enzyme in this species is believed to be ubiquinone. Couples the redox reaction to proton translocation (for every two electrons transferred, four hydrogen ions are translocated across the cytoplasmic membrane), and thus conserves the redox energy in a proton gradient.</text>
</comment>
<comment type="catalytic activity">
    <reaction evidence="1">
        <text>a quinone + NADH + 5 H(+)(in) = a quinol + NAD(+) + 4 H(+)(out)</text>
        <dbReference type="Rhea" id="RHEA:57888"/>
        <dbReference type="ChEBI" id="CHEBI:15378"/>
        <dbReference type="ChEBI" id="CHEBI:24646"/>
        <dbReference type="ChEBI" id="CHEBI:57540"/>
        <dbReference type="ChEBI" id="CHEBI:57945"/>
        <dbReference type="ChEBI" id="CHEBI:132124"/>
    </reaction>
</comment>
<comment type="subunit">
    <text evidence="1">NDH-1 is composed of 13 different subunits. Subunits NuoA, H, J, K, L, M, N constitute the membrane sector of the complex.</text>
</comment>
<comment type="subcellular location">
    <subcellularLocation>
        <location evidence="1">Cell inner membrane</location>
        <topology evidence="1">Multi-pass membrane protein</topology>
    </subcellularLocation>
</comment>
<comment type="similarity">
    <text evidence="1">Belongs to the complex I subunit 3 family.</text>
</comment>
<proteinExistence type="inferred from homology"/>
<keyword id="KW-0997">Cell inner membrane</keyword>
<keyword id="KW-1003">Cell membrane</keyword>
<keyword id="KW-0472">Membrane</keyword>
<keyword id="KW-0520">NAD</keyword>
<keyword id="KW-0874">Quinone</keyword>
<keyword id="KW-1185">Reference proteome</keyword>
<keyword id="KW-1278">Translocase</keyword>
<keyword id="KW-0812">Transmembrane</keyword>
<keyword id="KW-1133">Transmembrane helix</keyword>
<keyword id="KW-0813">Transport</keyword>
<keyword id="KW-0830">Ubiquinone</keyword>
<evidence type="ECO:0000255" key="1">
    <source>
        <dbReference type="HAMAP-Rule" id="MF_01394"/>
    </source>
</evidence>
<name>NUOA_ECO57</name>
<protein>
    <recommendedName>
        <fullName evidence="1">NADH-quinone oxidoreductase subunit A</fullName>
        <ecNumber evidence="1">7.1.1.-</ecNumber>
    </recommendedName>
    <alternativeName>
        <fullName evidence="1">NADH dehydrogenase I subunit A</fullName>
    </alternativeName>
    <alternativeName>
        <fullName evidence="1">NDH-1 subunit A</fullName>
    </alternativeName>
    <alternativeName>
        <fullName evidence="1">NUO1</fullName>
    </alternativeName>
</protein>
<dbReference type="EC" id="7.1.1.-" evidence="1"/>
<dbReference type="EMBL" id="AE005174">
    <property type="protein sequence ID" value="AAG57417.1"/>
    <property type="molecule type" value="Genomic_DNA"/>
</dbReference>
<dbReference type="EMBL" id="BA000007">
    <property type="protein sequence ID" value="BAB36595.1"/>
    <property type="molecule type" value="Genomic_DNA"/>
</dbReference>
<dbReference type="PIR" id="D91025">
    <property type="entry name" value="D91025"/>
</dbReference>
<dbReference type="RefSeq" id="NP_311199.3">
    <property type="nucleotide sequence ID" value="NC_002695.1"/>
</dbReference>
<dbReference type="RefSeq" id="WP_000062997.1">
    <property type="nucleotide sequence ID" value="NZ_VOAI01000001.1"/>
</dbReference>
<dbReference type="SMR" id="P0AFC5"/>
<dbReference type="STRING" id="155864.Z3547"/>
<dbReference type="GeneID" id="916880"/>
<dbReference type="GeneID" id="93774886"/>
<dbReference type="KEGG" id="ece:Z3547"/>
<dbReference type="KEGG" id="ecs:ECs_3172"/>
<dbReference type="PATRIC" id="fig|386585.9.peg.3310"/>
<dbReference type="eggNOG" id="COG0838">
    <property type="taxonomic scope" value="Bacteria"/>
</dbReference>
<dbReference type="HOGENOM" id="CLU_119549_2_0_6"/>
<dbReference type="OMA" id="YVYAFLY"/>
<dbReference type="Proteomes" id="UP000000558">
    <property type="component" value="Chromosome"/>
</dbReference>
<dbReference type="Proteomes" id="UP000002519">
    <property type="component" value="Chromosome"/>
</dbReference>
<dbReference type="GO" id="GO:0030964">
    <property type="term" value="C:NADH dehydrogenase complex"/>
    <property type="evidence" value="ECO:0007669"/>
    <property type="project" value="TreeGrafter"/>
</dbReference>
<dbReference type="GO" id="GO:0005886">
    <property type="term" value="C:plasma membrane"/>
    <property type="evidence" value="ECO:0007669"/>
    <property type="project" value="UniProtKB-SubCell"/>
</dbReference>
<dbReference type="GO" id="GO:0008137">
    <property type="term" value="F:NADH dehydrogenase (ubiquinone) activity"/>
    <property type="evidence" value="ECO:0007669"/>
    <property type="project" value="InterPro"/>
</dbReference>
<dbReference type="GO" id="GO:0050136">
    <property type="term" value="F:NADH:ubiquinone reductase (non-electrogenic) activity"/>
    <property type="evidence" value="ECO:0007669"/>
    <property type="project" value="UniProtKB-UniRule"/>
</dbReference>
<dbReference type="GO" id="GO:0048038">
    <property type="term" value="F:quinone binding"/>
    <property type="evidence" value="ECO:0007669"/>
    <property type="project" value="UniProtKB-KW"/>
</dbReference>
<dbReference type="FunFam" id="1.20.58.1610:FF:000003">
    <property type="entry name" value="NADH-quinone oxidoreductase subunit A"/>
    <property type="match status" value="1"/>
</dbReference>
<dbReference type="Gene3D" id="1.20.58.1610">
    <property type="entry name" value="NADH:ubiquinone/plastoquinone oxidoreductase, chain 3"/>
    <property type="match status" value="1"/>
</dbReference>
<dbReference type="HAMAP" id="MF_01394">
    <property type="entry name" value="NDH1_NuoA"/>
    <property type="match status" value="1"/>
</dbReference>
<dbReference type="InterPro" id="IPR023043">
    <property type="entry name" value="NAD(P)H_OxRDtase_bac/plastid"/>
</dbReference>
<dbReference type="InterPro" id="IPR000440">
    <property type="entry name" value="NADH_UbQ/plastoQ_OxRdtase_su3"/>
</dbReference>
<dbReference type="InterPro" id="IPR038430">
    <property type="entry name" value="NDAH_ubi_oxred_su3_sf"/>
</dbReference>
<dbReference type="PANTHER" id="PTHR11058:SF21">
    <property type="entry name" value="NADH-QUINONE OXIDOREDUCTASE SUBUNIT A"/>
    <property type="match status" value="1"/>
</dbReference>
<dbReference type="PANTHER" id="PTHR11058">
    <property type="entry name" value="NADH-UBIQUINONE OXIDOREDUCTASE CHAIN 3"/>
    <property type="match status" value="1"/>
</dbReference>
<dbReference type="Pfam" id="PF00507">
    <property type="entry name" value="Oxidored_q4"/>
    <property type="match status" value="1"/>
</dbReference>
<organism>
    <name type="scientific">Escherichia coli O157:H7</name>
    <dbReference type="NCBI Taxonomy" id="83334"/>
    <lineage>
        <taxon>Bacteria</taxon>
        <taxon>Pseudomonadati</taxon>
        <taxon>Pseudomonadota</taxon>
        <taxon>Gammaproteobacteria</taxon>
        <taxon>Enterobacterales</taxon>
        <taxon>Enterobacteriaceae</taxon>
        <taxon>Escherichia</taxon>
    </lineage>
</organism>
<gene>
    <name evidence="1" type="primary">nuoA</name>
    <name type="ordered locus">Z3547</name>
    <name type="ordered locus">ECs3172</name>
</gene>
<accession>P0AFC5</accession>
<accession>P33597</accession>
<accession>P77159</accession>
<feature type="chain" id="PRO_0000117863" description="NADH-quinone oxidoreductase subunit A">
    <location>
        <begin position="1"/>
        <end position="147"/>
    </location>
</feature>
<feature type="transmembrane region" description="Helical" evidence="1">
    <location>
        <begin position="16"/>
        <end position="36"/>
    </location>
</feature>
<feature type="transmembrane region" description="Helical" evidence="1">
    <location>
        <begin position="68"/>
        <end position="88"/>
    </location>
</feature>
<feature type="transmembrane region" description="Helical" evidence="1">
    <location>
        <begin position="98"/>
        <end position="118"/>
    </location>
</feature>
<sequence length="147" mass="16457">MSMSTSTEVIAHHWAFAIFLIVAIGLCCLMLVGGWFLGGRARARSKNVPFESGIDSVGSARLRLSAKFYLVAMFFVIFDVEALYLFAWSTSIRESGWVGFVEAAIFIFVLLAGLVYLVRIGALDWTPARSRRERMNPETNSIANRQR</sequence>
<reference key="1">
    <citation type="journal article" date="2001" name="Nature">
        <title>Genome sequence of enterohaemorrhagic Escherichia coli O157:H7.</title>
        <authorList>
            <person name="Perna N.T."/>
            <person name="Plunkett G. III"/>
            <person name="Burland V."/>
            <person name="Mau B."/>
            <person name="Glasner J.D."/>
            <person name="Rose D.J."/>
            <person name="Mayhew G.F."/>
            <person name="Evans P.S."/>
            <person name="Gregor J."/>
            <person name="Kirkpatrick H.A."/>
            <person name="Posfai G."/>
            <person name="Hackett J."/>
            <person name="Klink S."/>
            <person name="Boutin A."/>
            <person name="Shao Y."/>
            <person name="Miller L."/>
            <person name="Grotbeck E.J."/>
            <person name="Davis N.W."/>
            <person name="Lim A."/>
            <person name="Dimalanta E.T."/>
            <person name="Potamousis K."/>
            <person name="Apodaca J."/>
            <person name="Anantharaman T.S."/>
            <person name="Lin J."/>
            <person name="Yen G."/>
            <person name="Schwartz D.C."/>
            <person name="Welch R.A."/>
            <person name="Blattner F.R."/>
        </authorList>
    </citation>
    <scope>NUCLEOTIDE SEQUENCE [LARGE SCALE GENOMIC DNA]</scope>
    <source>
        <strain>O157:H7 / EDL933 / ATCC 700927 / EHEC</strain>
    </source>
</reference>
<reference key="2">
    <citation type="journal article" date="2001" name="DNA Res.">
        <title>Complete genome sequence of enterohemorrhagic Escherichia coli O157:H7 and genomic comparison with a laboratory strain K-12.</title>
        <authorList>
            <person name="Hayashi T."/>
            <person name="Makino K."/>
            <person name="Ohnishi M."/>
            <person name="Kurokawa K."/>
            <person name="Ishii K."/>
            <person name="Yokoyama K."/>
            <person name="Han C.-G."/>
            <person name="Ohtsubo E."/>
            <person name="Nakayama K."/>
            <person name="Murata T."/>
            <person name="Tanaka M."/>
            <person name="Tobe T."/>
            <person name="Iida T."/>
            <person name="Takami H."/>
            <person name="Honda T."/>
            <person name="Sasakawa C."/>
            <person name="Ogasawara N."/>
            <person name="Yasunaga T."/>
            <person name="Kuhara S."/>
            <person name="Shiba T."/>
            <person name="Hattori M."/>
            <person name="Shinagawa H."/>
        </authorList>
    </citation>
    <scope>NUCLEOTIDE SEQUENCE [LARGE SCALE GENOMIC DNA]</scope>
    <source>
        <strain>O157:H7 / Sakai / RIMD 0509952 / EHEC</strain>
    </source>
</reference>